<reference key="1">
    <citation type="journal article" date="1988" name="Gene">
        <title>The baboon beta-myosin heavy-chain gene: construction and characterization of cDNA clones and gene expression in cardiac tissues.</title>
        <authorList>
            <person name="Hixson J.E."/>
            <person name="Britten M.L."/>
        </authorList>
    </citation>
    <scope>NUCLEOTIDE SEQUENCE [MRNA]</scope>
</reference>
<keyword id="KW-0009">Actin-binding</keyword>
<keyword id="KW-0067">ATP-binding</keyword>
<keyword id="KW-0175">Coiled coil</keyword>
<keyword id="KW-0963">Cytoplasm</keyword>
<keyword id="KW-0505">Motor protein</keyword>
<keyword id="KW-0514">Muscle protein</keyword>
<keyword id="KW-0518">Myosin</keyword>
<keyword id="KW-0547">Nucleotide-binding</keyword>
<keyword id="KW-0787">Thick filament</keyword>
<feature type="chain" id="PRO_0000123409" description="Myosin-7">
    <location>
        <begin position="1" status="less than"/>
        <end position="244"/>
    </location>
</feature>
<feature type="region of interest" description="Rodlike tail (S2 and LMM domains)">
    <location>
        <begin position="1" status="less than"/>
        <end position="244"/>
    </location>
</feature>
<feature type="region of interest" description="Disordered" evidence="4">
    <location>
        <begin position="216"/>
        <end position="244"/>
    </location>
</feature>
<feature type="coiled-coil region" evidence="3">
    <location>
        <begin position="1" status="less than"/>
        <end position="244"/>
    </location>
</feature>
<feature type="compositionally biased region" description="Basic and acidic residues" evidence="4">
    <location>
        <begin position="232"/>
        <end position="244"/>
    </location>
</feature>
<feature type="non-terminal residue">
    <location>
        <position position="1"/>
    </location>
</feature>
<proteinExistence type="evidence at transcript level"/>
<evidence type="ECO:0000250" key="1">
    <source>
        <dbReference type="UniProtKB" id="P02564"/>
    </source>
</evidence>
<evidence type="ECO:0000250" key="2">
    <source>
        <dbReference type="UniProtKB" id="P12883"/>
    </source>
</evidence>
<evidence type="ECO:0000255" key="3"/>
<evidence type="ECO:0000256" key="4">
    <source>
        <dbReference type="SAM" id="MobiDB-lite"/>
    </source>
</evidence>
<evidence type="ECO:0000305" key="5"/>
<organism>
    <name type="scientific">Papio hamadryas</name>
    <name type="common">Hamadryas baboon</name>
    <dbReference type="NCBI Taxonomy" id="9557"/>
    <lineage>
        <taxon>Eukaryota</taxon>
        <taxon>Metazoa</taxon>
        <taxon>Chordata</taxon>
        <taxon>Craniata</taxon>
        <taxon>Vertebrata</taxon>
        <taxon>Euteleostomi</taxon>
        <taxon>Mammalia</taxon>
        <taxon>Eutheria</taxon>
        <taxon>Euarchontoglires</taxon>
        <taxon>Primates</taxon>
        <taxon>Haplorrhini</taxon>
        <taxon>Catarrhini</taxon>
        <taxon>Cercopithecidae</taxon>
        <taxon>Cercopithecinae</taxon>
        <taxon>Papio</taxon>
    </lineage>
</organism>
<protein>
    <recommendedName>
        <fullName>Myosin-7</fullName>
    </recommendedName>
    <alternativeName>
        <fullName>Myosin heavy chain 7</fullName>
    </alternativeName>
    <alternativeName>
        <fullName>Myosin heavy chain slow isoform</fullName>
        <shortName>MyHC-slow</shortName>
    </alternativeName>
    <alternativeName>
        <fullName>Myosin heavy chain, cardiac muscle beta isoform</fullName>
        <shortName>MyHC-beta</shortName>
    </alternativeName>
</protein>
<accession>P11778</accession>
<gene>
    <name type="primary">MYH7</name>
</gene>
<comment type="function">
    <text evidence="2">Myosins are actin-based motor molecules with ATPase activity essential for muscle contraction. Forms regular bipolar thick filaments that, together with actin thin filaments, constitute the fundamental contractile unit of skeletal and cardiac muscle.</text>
</comment>
<comment type="subunit">
    <text evidence="2">Muscle myosin is a hexameric protein that consists of 2 heavy chain subunits (MHC), 2 alkali light chain subunits (MLC) and 2 regulatory light chain subunits (MLC-2). Interacts with ECPAS. Interacts (via C-terminus) with LRRC39.</text>
</comment>
<comment type="subcellular location">
    <subcellularLocation>
        <location evidence="1">Cytoplasm</location>
        <location evidence="1">Myofibril</location>
    </subcellularLocation>
    <subcellularLocation>
        <location evidence="1">Cytoplasm</location>
        <location evidence="1">Myofibril</location>
        <location evidence="1">Sarcomere</location>
    </subcellularLocation>
    <text evidence="1">Thick filaments of the myofibrils.</text>
</comment>
<comment type="domain">
    <text evidence="5">Limited proteolysis of myosin heavy chain produces 1 light meromyosin (LMM) and 1 heavy meromyosin (HMM). HMM can be further cleaved into 2 globular subfragments (S1) and 1 rod-shaped subfragment (S2).</text>
</comment>
<comment type="domain">
    <text evidence="2">The rodlike tail sequence is highly repetitive, showing cycles of a 28-residue repeat pattern composed of 4 heptapeptides, characteristic for alpha-helical coiled coils. Four skip residues (Skip1-4) introduce discontinuities in the coiled-coil heptad repeats. The first three skip residues are structurally comparable and induce a unique local relaxation of the coiled-coil superhelical pitch and the fourth skip residue lies within a highly flexible molecular hinge that is necessary for myosin incorporation in the bare zone of sarcomeres.</text>
</comment>
<comment type="miscellaneous">
    <text>The cardiac alpha isoform is a 'fast' ATPase myosin, while the beta isoform is a 'slow' ATPase.</text>
</comment>
<comment type="caution">
    <text evidence="5">Represents a conventional myosin. This protein should not be confused with the unconventional myosin-7 (MYO7).</text>
</comment>
<sequence>VEQTERSRKLAEQELIETSERVQLLHSQNTSLINQKKKMDADLSQLQTEVEEAVQECRNAEEKAKKAITDAAMMAEELKKEQDTSAHLERMKKNMEQTIKDLQHRLDEAEQIALKGGKKQLQKLEARVRELENELEAEQKRNAESVKGMRKSERRIKELTYQTEEDRKNLLRLQDLVDKLQLKVKAYKRQAEEAEEQANTNLSKFRKVQHELDEAEERADIAESQVNKLRAKSRDIGTKGLNEE</sequence>
<dbReference type="EMBL" id="M19932">
    <property type="protein sequence ID" value="AAA35384.1"/>
    <property type="molecule type" value="mRNA"/>
</dbReference>
<dbReference type="PIR" id="I36913">
    <property type="entry name" value="I36913"/>
</dbReference>
<dbReference type="SMR" id="P11778"/>
<dbReference type="GO" id="GO:0030016">
    <property type="term" value="C:myofibril"/>
    <property type="evidence" value="ECO:0000250"/>
    <property type="project" value="UniProtKB"/>
</dbReference>
<dbReference type="GO" id="GO:0016459">
    <property type="term" value="C:myosin complex"/>
    <property type="evidence" value="ECO:0007669"/>
    <property type="project" value="UniProtKB-KW"/>
</dbReference>
<dbReference type="GO" id="GO:0032982">
    <property type="term" value="C:myosin filament"/>
    <property type="evidence" value="ECO:0000250"/>
    <property type="project" value="UniProtKB"/>
</dbReference>
<dbReference type="GO" id="GO:0030017">
    <property type="term" value="C:sarcomere"/>
    <property type="evidence" value="ECO:0000250"/>
    <property type="project" value="UniProtKB"/>
</dbReference>
<dbReference type="GO" id="GO:0003779">
    <property type="term" value="F:actin binding"/>
    <property type="evidence" value="ECO:0007669"/>
    <property type="project" value="UniProtKB-KW"/>
</dbReference>
<dbReference type="GO" id="GO:0005524">
    <property type="term" value="F:ATP binding"/>
    <property type="evidence" value="ECO:0007669"/>
    <property type="project" value="UniProtKB-KW"/>
</dbReference>
<dbReference type="FunFam" id="1.20.5.370:FF:000002">
    <property type="entry name" value="Myosin heavy chain"/>
    <property type="match status" value="1"/>
</dbReference>
<dbReference type="Gene3D" id="1.20.5.370">
    <property type="match status" value="2"/>
</dbReference>
<dbReference type="Gene3D" id="6.10.250.2420">
    <property type="match status" value="1"/>
</dbReference>
<dbReference type="InterPro" id="IPR002928">
    <property type="entry name" value="Myosin_tail"/>
</dbReference>
<dbReference type="InterPro" id="IPR014751">
    <property type="entry name" value="XRCC4-like_C"/>
</dbReference>
<dbReference type="PANTHER" id="PTHR46349">
    <property type="entry name" value="CINGULIN-LIKE PROTEIN 1-RELATED"/>
    <property type="match status" value="1"/>
</dbReference>
<dbReference type="PANTHER" id="PTHR46349:SF6">
    <property type="entry name" value="MYOSIN-6-LIKE"/>
    <property type="match status" value="1"/>
</dbReference>
<dbReference type="Pfam" id="PF01576">
    <property type="entry name" value="Myosin_tail_1"/>
    <property type="match status" value="1"/>
</dbReference>
<dbReference type="SUPFAM" id="SSF90257">
    <property type="entry name" value="Myosin rod fragments"/>
    <property type="match status" value="1"/>
</dbReference>
<name>MYH7_PAPHA</name>